<proteinExistence type="evidence at protein level"/>
<keyword id="KW-0067">ATP-binding</keyword>
<keyword id="KW-0418">Kinase</keyword>
<keyword id="KW-0460">Magnesium</keyword>
<keyword id="KW-0479">Metal-binding</keyword>
<keyword id="KW-0546">Nucleotide metabolism</keyword>
<keyword id="KW-0547">Nucleotide-binding</keyword>
<keyword id="KW-1185">Reference proteome</keyword>
<keyword id="KW-0808">Transferase</keyword>
<protein>
    <recommendedName>
        <fullName>Nucleoside diphosphate kinase 6</fullName>
        <shortName>NDK 6</shortName>
        <shortName>NDP kinase 6</shortName>
        <ecNumber>2.7.4.6</ecNumber>
    </recommendedName>
    <alternativeName>
        <fullName>nm23-M6</fullName>
    </alternativeName>
</protein>
<dbReference type="EC" id="2.7.4.6"/>
<dbReference type="EMBL" id="AF051942">
    <property type="protein sequence ID" value="AAC78464.1"/>
    <property type="molecule type" value="mRNA"/>
</dbReference>
<dbReference type="EMBL" id="BC002007">
    <property type="protein sequence ID" value="AAH02007.1"/>
    <property type="molecule type" value="mRNA"/>
</dbReference>
<dbReference type="CCDS" id="CCDS23558.1"/>
<dbReference type="RefSeq" id="NP_001396623.1">
    <property type="nucleotide sequence ID" value="NM_001409694.1"/>
</dbReference>
<dbReference type="RefSeq" id="NP_001396624.1">
    <property type="nucleotide sequence ID" value="NM_001409695.1"/>
</dbReference>
<dbReference type="RefSeq" id="NP_001396625.1">
    <property type="nucleotide sequence ID" value="NM_001409696.1"/>
</dbReference>
<dbReference type="RefSeq" id="NP_001396627.1">
    <property type="nucleotide sequence ID" value="NM_001409698.1"/>
</dbReference>
<dbReference type="RefSeq" id="NP_061227.1">
    <property type="nucleotide sequence ID" value="NM_018757.2"/>
</dbReference>
<dbReference type="RefSeq" id="XP_006512260.1">
    <property type="nucleotide sequence ID" value="XM_006512197.1"/>
</dbReference>
<dbReference type="RefSeq" id="XP_006512261.1">
    <property type="nucleotide sequence ID" value="XM_006512198.3"/>
</dbReference>
<dbReference type="RefSeq" id="XP_006512262.1">
    <property type="nucleotide sequence ID" value="XM_006512199.4"/>
</dbReference>
<dbReference type="SMR" id="O88425"/>
<dbReference type="FunCoup" id="O88425">
    <property type="interactions" value="3460"/>
</dbReference>
<dbReference type="STRING" id="10090.ENSMUSP00000035053"/>
<dbReference type="PhosphoSitePlus" id="O88425"/>
<dbReference type="PaxDb" id="10090-ENSMUSP00000113692"/>
<dbReference type="PeptideAtlas" id="O88425"/>
<dbReference type="ProteomicsDB" id="252933"/>
<dbReference type="Pumba" id="O88425"/>
<dbReference type="Antibodypedia" id="13081">
    <property type="antibodies" value="189 antibodies from 24 providers"/>
</dbReference>
<dbReference type="DNASU" id="54369"/>
<dbReference type="Ensembl" id="ENSMUST00000035053.12">
    <property type="protein sequence ID" value="ENSMUSP00000035053.6"/>
    <property type="gene ID" value="ENSMUSG00000032478.15"/>
</dbReference>
<dbReference type="Ensembl" id="ENSMUST00000200468.2">
    <property type="protein sequence ID" value="ENSMUSP00000143021.2"/>
    <property type="gene ID" value="ENSMUSG00000032478.15"/>
</dbReference>
<dbReference type="GeneID" id="54369"/>
<dbReference type="KEGG" id="mmu:54369"/>
<dbReference type="UCSC" id="uc009rst.1">
    <property type="organism name" value="mouse"/>
</dbReference>
<dbReference type="AGR" id="MGI:1861676"/>
<dbReference type="CTD" id="10201"/>
<dbReference type="MGI" id="MGI:1861676">
    <property type="gene designation" value="Nme6"/>
</dbReference>
<dbReference type="VEuPathDB" id="HostDB:ENSMUSG00000032478"/>
<dbReference type="eggNOG" id="KOG0888">
    <property type="taxonomic scope" value="Eukaryota"/>
</dbReference>
<dbReference type="GeneTree" id="ENSGT00940000160284"/>
<dbReference type="InParanoid" id="O88425"/>
<dbReference type="OMA" id="WRKEECQ"/>
<dbReference type="OrthoDB" id="25346at2759"/>
<dbReference type="PhylomeDB" id="O88425"/>
<dbReference type="TreeFam" id="TF354225"/>
<dbReference type="BioGRID-ORCS" id="54369">
    <property type="hits" value="11 hits in 81 CRISPR screens"/>
</dbReference>
<dbReference type="ChiTaRS" id="Nme6">
    <property type="organism name" value="mouse"/>
</dbReference>
<dbReference type="PRO" id="PR:O88425"/>
<dbReference type="Proteomes" id="UP000000589">
    <property type="component" value="Chromosome 9"/>
</dbReference>
<dbReference type="RNAct" id="O88425">
    <property type="molecule type" value="protein"/>
</dbReference>
<dbReference type="Bgee" id="ENSMUSG00000032478">
    <property type="expression patterns" value="Expressed in spermatocyte and 227 other cell types or tissues"/>
</dbReference>
<dbReference type="ExpressionAtlas" id="O88425">
    <property type="expression patterns" value="baseline and differential"/>
</dbReference>
<dbReference type="GO" id="GO:0005743">
    <property type="term" value="C:mitochondrial inner membrane"/>
    <property type="evidence" value="ECO:0007669"/>
    <property type="project" value="Ensembl"/>
</dbReference>
<dbReference type="GO" id="GO:0005759">
    <property type="term" value="C:mitochondrial matrix"/>
    <property type="evidence" value="ECO:0007669"/>
    <property type="project" value="Ensembl"/>
</dbReference>
<dbReference type="GO" id="GO:0005739">
    <property type="term" value="C:mitochondrion"/>
    <property type="evidence" value="ECO:0007005"/>
    <property type="project" value="MGI"/>
</dbReference>
<dbReference type="GO" id="GO:0005524">
    <property type="term" value="F:ATP binding"/>
    <property type="evidence" value="ECO:0007669"/>
    <property type="project" value="UniProtKB-KW"/>
</dbReference>
<dbReference type="GO" id="GO:0046872">
    <property type="term" value="F:metal ion binding"/>
    <property type="evidence" value="ECO:0007669"/>
    <property type="project" value="UniProtKB-KW"/>
</dbReference>
<dbReference type="GO" id="GO:0004550">
    <property type="term" value="F:nucleoside diphosphate kinase activity"/>
    <property type="evidence" value="ECO:0007669"/>
    <property type="project" value="UniProtKB-EC"/>
</dbReference>
<dbReference type="GO" id="GO:0006241">
    <property type="term" value="P:CTP biosynthetic process"/>
    <property type="evidence" value="ECO:0007669"/>
    <property type="project" value="InterPro"/>
</dbReference>
<dbReference type="GO" id="GO:0006183">
    <property type="term" value="P:GTP biosynthetic process"/>
    <property type="evidence" value="ECO:0007669"/>
    <property type="project" value="InterPro"/>
</dbReference>
<dbReference type="GO" id="GO:0030308">
    <property type="term" value="P:negative regulation of cell growth"/>
    <property type="evidence" value="ECO:0007669"/>
    <property type="project" value="Ensembl"/>
</dbReference>
<dbReference type="GO" id="GO:0045839">
    <property type="term" value="P:negative regulation of mitotic nuclear division"/>
    <property type="evidence" value="ECO:0007669"/>
    <property type="project" value="Ensembl"/>
</dbReference>
<dbReference type="GO" id="GO:0006228">
    <property type="term" value="P:UTP biosynthetic process"/>
    <property type="evidence" value="ECO:0007669"/>
    <property type="project" value="InterPro"/>
</dbReference>
<dbReference type="CDD" id="cd04414">
    <property type="entry name" value="NDPk6"/>
    <property type="match status" value="1"/>
</dbReference>
<dbReference type="FunFam" id="3.30.70.141:FF:000006">
    <property type="entry name" value="Nucleoside diphosphate kinase"/>
    <property type="match status" value="1"/>
</dbReference>
<dbReference type="Gene3D" id="3.30.70.141">
    <property type="entry name" value="Nucleoside diphosphate kinase-like domain"/>
    <property type="match status" value="1"/>
</dbReference>
<dbReference type="InterPro" id="IPR034907">
    <property type="entry name" value="NDK-like_dom"/>
</dbReference>
<dbReference type="InterPro" id="IPR036850">
    <property type="entry name" value="NDK-like_dom_sf"/>
</dbReference>
<dbReference type="InterPro" id="IPR037994">
    <property type="entry name" value="NDPk6"/>
</dbReference>
<dbReference type="InterPro" id="IPR001564">
    <property type="entry name" value="Nucleoside_diP_kinase"/>
</dbReference>
<dbReference type="InterPro" id="IPR023005">
    <property type="entry name" value="Nucleoside_diP_kinase_AS"/>
</dbReference>
<dbReference type="PANTHER" id="PTHR46956">
    <property type="entry name" value="NUCLEOSIDE DIPHOSPHATE KINASE 6"/>
    <property type="match status" value="1"/>
</dbReference>
<dbReference type="PANTHER" id="PTHR46956:SF1">
    <property type="entry name" value="NUCLEOSIDE DIPHOSPHATE KINASE 6"/>
    <property type="match status" value="1"/>
</dbReference>
<dbReference type="Pfam" id="PF00334">
    <property type="entry name" value="NDK"/>
    <property type="match status" value="1"/>
</dbReference>
<dbReference type="PRINTS" id="PR01243">
    <property type="entry name" value="NUCDPKINASE"/>
</dbReference>
<dbReference type="SMART" id="SM00562">
    <property type="entry name" value="NDK"/>
    <property type="match status" value="1"/>
</dbReference>
<dbReference type="SUPFAM" id="SSF54919">
    <property type="entry name" value="Nucleoside diphosphate kinase, NDK"/>
    <property type="match status" value="1"/>
</dbReference>
<dbReference type="PROSITE" id="PS00469">
    <property type="entry name" value="NDPK"/>
    <property type="match status" value="1"/>
</dbReference>
<dbReference type="PROSITE" id="PS51374">
    <property type="entry name" value="NDPK_LIKE"/>
    <property type="match status" value="1"/>
</dbReference>
<organism>
    <name type="scientific">Mus musculus</name>
    <name type="common">Mouse</name>
    <dbReference type="NCBI Taxonomy" id="10090"/>
    <lineage>
        <taxon>Eukaryota</taxon>
        <taxon>Metazoa</taxon>
        <taxon>Chordata</taxon>
        <taxon>Craniata</taxon>
        <taxon>Vertebrata</taxon>
        <taxon>Euteleostomi</taxon>
        <taxon>Mammalia</taxon>
        <taxon>Eutheria</taxon>
        <taxon>Euarchontoglires</taxon>
        <taxon>Glires</taxon>
        <taxon>Rodentia</taxon>
        <taxon>Myomorpha</taxon>
        <taxon>Muroidea</taxon>
        <taxon>Muridae</taxon>
        <taxon>Murinae</taxon>
        <taxon>Mus</taxon>
        <taxon>Mus</taxon>
    </lineage>
</organism>
<accession>O88425</accession>
<accession>Q99M53</accession>
<sequence>MTSILRSPQALQLTLALIKPDAVAHPLILEAVHQQILSNKFLIVRTRELQWKLEDCRRFYREHEGRFFYQRLVEFMTSGPIRAYILAHKDAIQLWRTLMGPTRVFRARYIAPDSIRGSLGLTDTRNTTHGSDSVVSASREIAAFFPDFSEQRWYEEEEPQLRCGPVHYSPEEGIHCAAETGGHKQPNKT</sequence>
<evidence type="ECO:0000250" key="1"/>
<evidence type="ECO:0000255" key="2">
    <source>
        <dbReference type="PROSITE-ProRule" id="PRU10030"/>
    </source>
</evidence>
<evidence type="ECO:0000305" key="3"/>
<gene>
    <name type="primary">Nme6</name>
</gene>
<comment type="function">
    <text>Major role in the synthesis of nucleoside triphosphates other than ATP. The ATP gamma phosphate is transferred to the NDP beta phosphate via a ping-pong mechanism, using a phosphorylated active-site intermediate.</text>
</comment>
<comment type="catalytic activity">
    <reaction evidence="2">
        <text>a 2'-deoxyribonucleoside 5'-diphosphate + ATP = a 2'-deoxyribonucleoside 5'-triphosphate + ADP</text>
        <dbReference type="Rhea" id="RHEA:44640"/>
        <dbReference type="ChEBI" id="CHEBI:30616"/>
        <dbReference type="ChEBI" id="CHEBI:61560"/>
        <dbReference type="ChEBI" id="CHEBI:73316"/>
        <dbReference type="ChEBI" id="CHEBI:456216"/>
        <dbReference type="EC" id="2.7.4.6"/>
    </reaction>
</comment>
<comment type="catalytic activity">
    <reaction evidence="2">
        <text>a ribonucleoside 5'-diphosphate + ATP = a ribonucleoside 5'-triphosphate + ADP</text>
        <dbReference type="Rhea" id="RHEA:18113"/>
        <dbReference type="ChEBI" id="CHEBI:30616"/>
        <dbReference type="ChEBI" id="CHEBI:57930"/>
        <dbReference type="ChEBI" id="CHEBI:61557"/>
        <dbReference type="ChEBI" id="CHEBI:456216"/>
        <dbReference type="EC" id="2.7.4.6"/>
    </reaction>
</comment>
<comment type="cofactor">
    <cofactor evidence="1">
        <name>Mg(2+)</name>
        <dbReference type="ChEBI" id="CHEBI:18420"/>
    </cofactor>
</comment>
<comment type="similarity">
    <text evidence="3">Belongs to the NDK family.</text>
</comment>
<reference key="1">
    <citation type="journal article" date="1999" name="Hum. Genet.">
        <title>NME6: a new member of the nm23/nucleoside diphosphate kinase gene family located on human chromosome 3p21.3.</title>
        <authorList>
            <person name="Mehus J.G."/>
            <person name="Deloukas P."/>
            <person name="Lambeth D.O."/>
        </authorList>
    </citation>
    <scope>NUCLEOTIDE SEQUENCE [MRNA]</scope>
    <source>
        <tissue>Heart</tissue>
    </source>
</reference>
<reference key="2">
    <citation type="journal article" date="2004" name="Genome Res.">
        <title>The status, quality, and expansion of the NIH full-length cDNA project: the Mammalian Gene Collection (MGC).</title>
        <authorList>
            <consortium name="The MGC Project Team"/>
        </authorList>
    </citation>
    <scope>NUCLEOTIDE SEQUENCE [LARGE SCALE MRNA]</scope>
</reference>
<reference key="3">
    <citation type="journal article" date="2010" name="Cell">
        <title>A tissue-specific atlas of mouse protein phosphorylation and expression.</title>
        <authorList>
            <person name="Huttlin E.L."/>
            <person name="Jedrychowski M.P."/>
            <person name="Elias J.E."/>
            <person name="Goswami T."/>
            <person name="Rad R."/>
            <person name="Beausoleil S.A."/>
            <person name="Villen J."/>
            <person name="Haas W."/>
            <person name="Sowa M.E."/>
            <person name="Gygi S.P."/>
        </authorList>
    </citation>
    <scope>IDENTIFICATION BY MASS SPECTROMETRY [LARGE SCALE ANALYSIS]</scope>
    <source>
        <tissue>Liver</tissue>
    </source>
</reference>
<name>NDK6_MOUSE</name>
<feature type="chain" id="PRO_0000137128" description="Nucleoside diphosphate kinase 6">
    <location>
        <begin position="1"/>
        <end position="189"/>
    </location>
</feature>
<feature type="active site" description="Pros-phosphohistidine intermediate" evidence="2">
    <location>
        <position position="129"/>
    </location>
</feature>
<feature type="binding site" evidence="1">
    <location>
        <position position="19"/>
    </location>
    <ligand>
        <name>ATP</name>
        <dbReference type="ChEBI" id="CHEBI:30616"/>
    </ligand>
</feature>
<feature type="binding site" evidence="1">
    <location>
        <position position="68"/>
    </location>
    <ligand>
        <name>ATP</name>
        <dbReference type="ChEBI" id="CHEBI:30616"/>
    </ligand>
</feature>
<feature type="binding site" evidence="1">
    <location>
        <position position="96"/>
    </location>
    <ligand>
        <name>ATP</name>
        <dbReference type="ChEBI" id="CHEBI:30616"/>
    </ligand>
</feature>
<feature type="binding site" evidence="1">
    <location>
        <position position="102"/>
    </location>
    <ligand>
        <name>ATP</name>
        <dbReference type="ChEBI" id="CHEBI:30616"/>
    </ligand>
</feature>
<feature type="binding site" evidence="1">
    <location>
        <position position="116"/>
    </location>
    <ligand>
        <name>ATP</name>
        <dbReference type="ChEBI" id="CHEBI:30616"/>
    </ligand>
</feature>
<feature type="binding site" evidence="1">
    <location>
        <position position="126"/>
    </location>
    <ligand>
        <name>ATP</name>
        <dbReference type="ChEBI" id="CHEBI:30616"/>
    </ligand>
</feature>
<feature type="sequence conflict" description="In Ref. 2; AAH02007." evidence="3" ref="2">
    <original>E</original>
    <variation>G</variation>
    <location>
        <position position="179"/>
    </location>
</feature>
<feature type="sequence conflict" description="In Ref. 2; AAH02007." evidence="3" ref="2">
    <original>T</original>
    <variation>A</variation>
    <location>
        <position position="189"/>
    </location>
</feature>